<dbReference type="EMBL" id="U00096">
    <property type="protein sequence ID" value="AAC75557.1"/>
    <property type="molecule type" value="Genomic_DNA"/>
</dbReference>
<dbReference type="EMBL" id="AP009048">
    <property type="protein sequence ID" value="BAE76725.1"/>
    <property type="molecule type" value="Genomic_DNA"/>
</dbReference>
<dbReference type="PIR" id="G65026">
    <property type="entry name" value="G65026"/>
</dbReference>
<dbReference type="RefSeq" id="NP_416999.1">
    <property type="nucleotide sequence ID" value="NC_000913.3"/>
</dbReference>
<dbReference type="RefSeq" id="WP_000076001.1">
    <property type="nucleotide sequence ID" value="NZ_STEB01000011.1"/>
</dbReference>
<dbReference type="SMR" id="P64545"/>
<dbReference type="BioGRID" id="4260586">
    <property type="interactions" value="7"/>
</dbReference>
<dbReference type="FunCoup" id="P64545">
    <property type="interactions" value="52"/>
</dbReference>
<dbReference type="STRING" id="511145.b2504"/>
<dbReference type="TCDB" id="9.B.209.1.1">
    <property type="family name" value="the duf2633 (duf2633) family"/>
</dbReference>
<dbReference type="PaxDb" id="511145-b2504"/>
<dbReference type="EnsemblBacteria" id="AAC75557">
    <property type="protein sequence ID" value="AAC75557"/>
    <property type="gene ID" value="b2504"/>
</dbReference>
<dbReference type="GeneID" id="946980"/>
<dbReference type="KEGG" id="ecj:JW5399"/>
<dbReference type="KEGG" id="eco:b2504"/>
<dbReference type="KEGG" id="ecoc:C3026_13890"/>
<dbReference type="PATRIC" id="fig|511145.12.peg.2602"/>
<dbReference type="EchoBASE" id="EB3955"/>
<dbReference type="eggNOG" id="ENOG5032Z5K">
    <property type="taxonomic scope" value="Bacteria"/>
</dbReference>
<dbReference type="HOGENOM" id="CLU_200567_2_1_6"/>
<dbReference type="InParanoid" id="P64545"/>
<dbReference type="OMA" id="RFNRRMT"/>
<dbReference type="PhylomeDB" id="P64545"/>
<dbReference type="BioCyc" id="EcoCyc:G7315-MONOMER"/>
<dbReference type="PRO" id="PR:P64545"/>
<dbReference type="Proteomes" id="UP000000625">
    <property type="component" value="Chromosome"/>
</dbReference>
<dbReference type="GO" id="GO:0005886">
    <property type="term" value="C:plasma membrane"/>
    <property type="evidence" value="ECO:0007669"/>
    <property type="project" value="UniProtKB-SubCell"/>
</dbReference>
<dbReference type="GO" id="GO:0097501">
    <property type="term" value="P:stress response to metal ion"/>
    <property type="evidence" value="ECO:0000315"/>
    <property type="project" value="EcoCyc"/>
</dbReference>
<dbReference type="GO" id="GO:1990532">
    <property type="term" value="P:stress response to nickel ion"/>
    <property type="evidence" value="ECO:0000315"/>
    <property type="project" value="EcoCyc"/>
</dbReference>
<dbReference type="InterPro" id="IPR022576">
    <property type="entry name" value="YfgG"/>
</dbReference>
<dbReference type="Pfam" id="PF11119">
    <property type="entry name" value="DUF2633"/>
    <property type="match status" value="1"/>
</dbReference>
<comment type="subcellular location">
    <subcellularLocation>
        <location evidence="3">Cell inner membrane</location>
        <topology evidence="3">Single-pass membrane protein</topology>
    </subcellularLocation>
</comment>
<comment type="induction">
    <text evidence="2">By heat shock (shift from 30 to 45 degrees Celsius) (at protein level).</text>
</comment>
<evidence type="ECO:0000255" key="1"/>
<evidence type="ECO:0000269" key="2">
    <source>
    </source>
</evidence>
<evidence type="ECO:0000305" key="3"/>
<protein>
    <recommendedName>
        <fullName>Protein YfgG</fullName>
    </recommendedName>
</protein>
<keyword id="KW-0997">Cell inner membrane</keyword>
<keyword id="KW-1003">Cell membrane</keyword>
<keyword id="KW-0903">Direct protein sequencing</keyword>
<keyword id="KW-0472">Membrane</keyword>
<keyword id="KW-1185">Reference proteome</keyword>
<keyword id="KW-0346">Stress response</keyword>
<keyword id="KW-0812">Transmembrane</keyword>
<keyword id="KW-1133">Transmembrane helix</keyword>
<accession>P64545</accession>
<accession>P76571</accession>
<accession>Q2MAI1</accession>
<proteinExistence type="evidence at protein level"/>
<feature type="chain" id="PRO_0000169242" description="Protein YfgG">
    <location>
        <begin position="1"/>
        <end position="63"/>
    </location>
</feature>
<feature type="transmembrane region" description="Helical" evidence="1">
    <location>
        <begin position="20"/>
        <end position="40"/>
    </location>
</feature>
<reference key="1">
    <citation type="journal article" date="1997" name="Science">
        <title>The complete genome sequence of Escherichia coli K-12.</title>
        <authorList>
            <person name="Blattner F.R."/>
            <person name="Plunkett G. III"/>
            <person name="Bloch C.A."/>
            <person name="Perna N.T."/>
            <person name="Burland V."/>
            <person name="Riley M."/>
            <person name="Collado-Vides J."/>
            <person name="Glasner J.D."/>
            <person name="Rode C.K."/>
            <person name="Mayhew G.F."/>
            <person name="Gregor J."/>
            <person name="Davis N.W."/>
            <person name="Kirkpatrick H.A."/>
            <person name="Goeden M.A."/>
            <person name="Rose D.J."/>
            <person name="Mau B."/>
            <person name="Shao Y."/>
        </authorList>
    </citation>
    <scope>NUCLEOTIDE SEQUENCE [LARGE SCALE GENOMIC DNA]</scope>
    <source>
        <strain>K12 / MG1655 / ATCC 47076</strain>
    </source>
</reference>
<reference key="2">
    <citation type="journal article" date="2006" name="Mol. Syst. Biol.">
        <title>Highly accurate genome sequences of Escherichia coli K-12 strains MG1655 and W3110.</title>
        <authorList>
            <person name="Hayashi K."/>
            <person name="Morooka N."/>
            <person name="Yamamoto Y."/>
            <person name="Fujita K."/>
            <person name="Isono K."/>
            <person name="Choi S."/>
            <person name="Ohtsubo E."/>
            <person name="Baba T."/>
            <person name="Wanner B.L."/>
            <person name="Mori H."/>
            <person name="Horiuchi T."/>
        </authorList>
    </citation>
    <scope>NUCLEOTIDE SEQUENCE [LARGE SCALE GENOMIC DNA]</scope>
    <source>
        <strain>K12 / W3110 / ATCC 27325 / DSM 5911</strain>
    </source>
</reference>
<reference key="3">
    <citation type="journal article" date="2018" name="Biochemistry">
        <title>Comparative membrane proteomics reveals a nonannotated E. coli heat shock protein.</title>
        <authorList>
            <person name="Yuan P."/>
            <person name="D'Lima N.G."/>
            <person name="Slavoff S.A."/>
        </authorList>
    </citation>
    <scope>PROTEIN SEQUENCE OF 49-59</scope>
    <scope>IDENTIFICATION</scope>
    <scope>INDUCTION BY HEAT SHOCK</scope>
    <source>
        <strain>K12 / MG1655 / ATCC 47076</strain>
    </source>
</reference>
<sequence length="63" mass="7462">MSQATSMRKRHRFNSRMTRIVLLISFIFFFGRFIYSSVGAWQHHQSKKEAQQSTLSVESPVQR</sequence>
<name>YFGG_ECOLI</name>
<gene>
    <name type="primary">yfgG</name>
    <name type="ordered locus">b2504</name>
    <name type="ordered locus">JW5399</name>
</gene>
<organism>
    <name type="scientific">Escherichia coli (strain K12)</name>
    <dbReference type="NCBI Taxonomy" id="83333"/>
    <lineage>
        <taxon>Bacteria</taxon>
        <taxon>Pseudomonadati</taxon>
        <taxon>Pseudomonadota</taxon>
        <taxon>Gammaproteobacteria</taxon>
        <taxon>Enterobacterales</taxon>
        <taxon>Enterobacteriaceae</taxon>
        <taxon>Escherichia</taxon>
    </lineage>
</organism>